<reference key="1">
    <citation type="journal article" date="2008" name="DNA Res.">
        <title>Complete genome sequence and comparative analysis of the wild-type commensal Escherichia coli strain SE11 isolated from a healthy adult.</title>
        <authorList>
            <person name="Oshima K."/>
            <person name="Toh H."/>
            <person name="Ogura Y."/>
            <person name="Sasamoto H."/>
            <person name="Morita H."/>
            <person name="Park S.-H."/>
            <person name="Ooka T."/>
            <person name="Iyoda S."/>
            <person name="Taylor T.D."/>
            <person name="Hayashi T."/>
            <person name="Itoh K."/>
            <person name="Hattori M."/>
        </authorList>
    </citation>
    <scope>NUCLEOTIDE SEQUENCE [LARGE SCALE GENOMIC DNA]</scope>
    <source>
        <strain>SE11</strain>
    </source>
</reference>
<proteinExistence type="inferred from homology"/>
<organism>
    <name type="scientific">Escherichia coli (strain SE11)</name>
    <dbReference type="NCBI Taxonomy" id="409438"/>
    <lineage>
        <taxon>Bacteria</taxon>
        <taxon>Pseudomonadati</taxon>
        <taxon>Pseudomonadota</taxon>
        <taxon>Gammaproteobacteria</taxon>
        <taxon>Enterobacterales</taxon>
        <taxon>Enterobacteriaceae</taxon>
        <taxon>Escherichia</taxon>
    </lineage>
</organism>
<sequence>MFRWGIIFLVIALIAAALGFGGLAGTAAGAAKIVFVVGIILFLVSLFMGRKRP</sequence>
<comment type="subcellular location">
    <subcellularLocation>
        <location evidence="1">Cell membrane</location>
        <topology evidence="1">Multi-pass membrane protein</topology>
    </subcellularLocation>
</comment>
<comment type="similarity">
    <text evidence="1">Belongs to the UPF0391 family.</text>
</comment>
<dbReference type="EMBL" id="AP009240">
    <property type="protein sequence ID" value="BAG80175.1"/>
    <property type="molecule type" value="Genomic_DNA"/>
</dbReference>
<dbReference type="RefSeq" id="WP_000490275.1">
    <property type="nucleotide sequence ID" value="NC_011415.1"/>
</dbReference>
<dbReference type="KEGG" id="ecy:ECSE_4651"/>
<dbReference type="HOGENOM" id="CLU_187346_2_0_6"/>
<dbReference type="Proteomes" id="UP000008199">
    <property type="component" value="Chromosome"/>
</dbReference>
<dbReference type="GO" id="GO:0005886">
    <property type="term" value="C:plasma membrane"/>
    <property type="evidence" value="ECO:0007669"/>
    <property type="project" value="UniProtKB-SubCell"/>
</dbReference>
<dbReference type="HAMAP" id="MF_01361">
    <property type="entry name" value="UPF0391"/>
    <property type="match status" value="1"/>
</dbReference>
<dbReference type="InterPro" id="IPR009760">
    <property type="entry name" value="DUF1328"/>
</dbReference>
<dbReference type="NCBIfam" id="NF010229">
    <property type="entry name" value="PRK13682.1-4"/>
    <property type="match status" value="1"/>
</dbReference>
<dbReference type="NCBIfam" id="NF010230">
    <property type="entry name" value="PRK13682.1-5"/>
    <property type="match status" value="1"/>
</dbReference>
<dbReference type="Pfam" id="PF07043">
    <property type="entry name" value="DUF1328"/>
    <property type="match status" value="1"/>
</dbReference>
<dbReference type="PIRSF" id="PIRSF036466">
    <property type="entry name" value="UCP036466"/>
    <property type="match status" value="1"/>
</dbReference>
<gene>
    <name evidence="1" type="primary">ytjA</name>
    <name type="ordered locus">ECSE_4651</name>
</gene>
<accession>B6I2Q8</accession>
<feature type="chain" id="PRO_1000143711" description="UPF0391 membrane protein YtjA">
    <location>
        <begin position="1"/>
        <end position="53"/>
    </location>
</feature>
<feature type="transmembrane region" description="Helical" evidence="1">
    <location>
        <begin position="4"/>
        <end position="24"/>
    </location>
</feature>
<feature type="transmembrane region" description="Helical" evidence="1">
    <location>
        <begin position="30"/>
        <end position="48"/>
    </location>
</feature>
<name>YTJA_ECOSE</name>
<keyword id="KW-1003">Cell membrane</keyword>
<keyword id="KW-0472">Membrane</keyword>
<keyword id="KW-0812">Transmembrane</keyword>
<keyword id="KW-1133">Transmembrane helix</keyword>
<protein>
    <recommendedName>
        <fullName evidence="1">UPF0391 membrane protein YtjA</fullName>
    </recommendedName>
</protein>
<evidence type="ECO:0000255" key="1">
    <source>
        <dbReference type="HAMAP-Rule" id="MF_01361"/>
    </source>
</evidence>